<name>SYFB_ARCFU</name>
<reference key="1">
    <citation type="journal article" date="1997" name="Nature">
        <title>The complete genome sequence of the hyperthermophilic, sulphate-reducing archaeon Archaeoglobus fulgidus.</title>
        <authorList>
            <person name="Klenk H.-P."/>
            <person name="Clayton R.A."/>
            <person name="Tomb J.-F."/>
            <person name="White O."/>
            <person name="Nelson K.E."/>
            <person name="Ketchum K.A."/>
            <person name="Dodson R.J."/>
            <person name="Gwinn M.L."/>
            <person name="Hickey E.K."/>
            <person name="Peterson J.D."/>
            <person name="Richardson D.L."/>
            <person name="Kerlavage A.R."/>
            <person name="Graham D.E."/>
            <person name="Kyrpides N.C."/>
            <person name="Fleischmann R.D."/>
            <person name="Quackenbush J."/>
            <person name="Lee N.H."/>
            <person name="Sutton G.G."/>
            <person name="Gill S.R."/>
            <person name="Kirkness E.F."/>
            <person name="Dougherty B.A."/>
            <person name="McKenney K."/>
            <person name="Adams M.D."/>
            <person name="Loftus B.J."/>
            <person name="Peterson S.N."/>
            <person name="Reich C.I."/>
            <person name="McNeil L.K."/>
            <person name="Badger J.H."/>
            <person name="Glodek A."/>
            <person name="Zhou L."/>
            <person name="Overbeek R."/>
            <person name="Gocayne J.D."/>
            <person name="Weidman J.F."/>
            <person name="McDonald L.A."/>
            <person name="Utterback T.R."/>
            <person name="Cotton M.D."/>
            <person name="Spriggs T."/>
            <person name="Artiach P."/>
            <person name="Kaine B.P."/>
            <person name="Sykes S.M."/>
            <person name="Sadow P.W."/>
            <person name="D'Andrea K.P."/>
            <person name="Bowman C."/>
            <person name="Fujii C."/>
            <person name="Garland S.A."/>
            <person name="Mason T.M."/>
            <person name="Olsen G.J."/>
            <person name="Fraser C.M."/>
            <person name="Smith H.O."/>
            <person name="Woese C.R."/>
            <person name="Venter J.C."/>
        </authorList>
    </citation>
    <scope>NUCLEOTIDE SEQUENCE [LARGE SCALE GENOMIC DNA]</scope>
    <source>
        <strain>ATCC 49558 / DSM 4304 / JCM 9628 / NBRC 100126 / VC-16</strain>
    </source>
</reference>
<keyword id="KW-0030">Aminoacyl-tRNA synthetase</keyword>
<keyword id="KW-0067">ATP-binding</keyword>
<keyword id="KW-0963">Cytoplasm</keyword>
<keyword id="KW-0436">Ligase</keyword>
<keyword id="KW-0460">Magnesium</keyword>
<keyword id="KW-0479">Metal-binding</keyword>
<keyword id="KW-0547">Nucleotide-binding</keyword>
<keyword id="KW-0648">Protein biosynthesis</keyword>
<keyword id="KW-1185">Reference proteome</keyword>
<evidence type="ECO:0000255" key="1">
    <source>
        <dbReference type="HAMAP-Rule" id="MF_00284"/>
    </source>
</evidence>
<evidence type="ECO:0000305" key="2"/>
<sequence length="547" mass="62278">MPVVTLYWDELERLVGADRDTILSRLPMLGCDIERVEDDHVDVEFFPNRPDLYSVEGVARALRGFLGIEKGLKSYSAVKGEWKITVEESVLAVRPRIVGCVVKGIRMTDEVIRSLMEVQEDLHWTIGRNRRKMAIGVHDLSKVYFPLRYKAVDANFSFVPLDFDREMTVAEILEEHPKGKAYAFILEGKDSYPMIVDSKDEVISFPPIINAEKTRVTEETTDLFIDVTGFDENVDRAIAILACMLADRGGRIESVEVVYPDHVELTPNLDVRFMEVDVDEVNSLLGLSLSAEEIKESLEKMRFSCEIEGEKLKVGIPPYRADIMHEWDVIEDVAIGYGYENITPEIPPTLTFGRTHPWNDIRSLAKEIMIGLGFTEVITFTLTNEAVMYEKMRRKGEPWKDYVPVMHPLTTEHTILRTSLLPKLLELLSYNKHHEMPQMVFEVGDVVVNSKNRLHLAACITHSRANFSEIRSYVQAVMRELDLTWEVRESDDEAFIDGRRAEIVVDGKAVGVFGEVHPEVLEGFELTMPVSAFEIDLSAFFDTGELL</sequence>
<feature type="chain" id="PRO_0000126999" description="Phenylalanine--tRNA ligase beta subunit">
    <location>
        <begin position="1"/>
        <end position="547"/>
    </location>
</feature>
<feature type="domain" description="B5" evidence="1">
    <location>
        <begin position="269"/>
        <end position="344"/>
    </location>
</feature>
<feature type="binding site" evidence="1">
    <location>
        <position position="322"/>
    </location>
    <ligand>
        <name>Mg(2+)</name>
        <dbReference type="ChEBI" id="CHEBI:18420"/>
        <note>shared with alpha subunit</note>
    </ligand>
</feature>
<feature type="binding site" evidence="1">
    <location>
        <position position="328"/>
    </location>
    <ligand>
        <name>Mg(2+)</name>
        <dbReference type="ChEBI" id="CHEBI:18420"/>
        <note>shared with alpha subunit</note>
    </ligand>
</feature>
<feature type="binding site" evidence="1">
    <location>
        <position position="331"/>
    </location>
    <ligand>
        <name>Mg(2+)</name>
        <dbReference type="ChEBI" id="CHEBI:18420"/>
        <note>shared with alpha subunit</note>
    </ligand>
</feature>
<feature type="binding site" evidence="1">
    <location>
        <position position="332"/>
    </location>
    <ligand>
        <name>Mg(2+)</name>
        <dbReference type="ChEBI" id="CHEBI:18420"/>
        <note>shared with alpha subunit</note>
    </ligand>
</feature>
<organism>
    <name type="scientific">Archaeoglobus fulgidus (strain ATCC 49558 / DSM 4304 / JCM 9628 / NBRC 100126 / VC-16)</name>
    <dbReference type="NCBI Taxonomy" id="224325"/>
    <lineage>
        <taxon>Archaea</taxon>
        <taxon>Methanobacteriati</taxon>
        <taxon>Methanobacteriota</taxon>
        <taxon>Archaeoglobi</taxon>
        <taxon>Archaeoglobales</taxon>
        <taxon>Archaeoglobaceae</taxon>
        <taxon>Archaeoglobus</taxon>
    </lineage>
</organism>
<proteinExistence type="inferred from homology"/>
<accession>O28848</accession>
<dbReference type="EC" id="6.1.1.20" evidence="1"/>
<dbReference type="EMBL" id="AE000782">
    <property type="protein sequence ID" value="AAB89822.1"/>
    <property type="molecule type" value="Genomic_DNA"/>
</dbReference>
<dbReference type="PIR" id="G69427">
    <property type="entry name" value="G69427"/>
</dbReference>
<dbReference type="RefSeq" id="WP_010878921.1">
    <property type="nucleotide sequence ID" value="NC_000917.1"/>
</dbReference>
<dbReference type="SMR" id="O28848"/>
<dbReference type="STRING" id="224325.AF_1424"/>
<dbReference type="PaxDb" id="224325-AF_1424"/>
<dbReference type="EnsemblBacteria" id="AAB89822">
    <property type="protein sequence ID" value="AAB89822"/>
    <property type="gene ID" value="AF_1424"/>
</dbReference>
<dbReference type="GeneID" id="24795036"/>
<dbReference type="KEGG" id="afu:AF_1424"/>
<dbReference type="eggNOG" id="arCOG00412">
    <property type="taxonomic scope" value="Archaea"/>
</dbReference>
<dbReference type="HOGENOM" id="CLU_020279_3_0_2"/>
<dbReference type="OrthoDB" id="10073at2157"/>
<dbReference type="PhylomeDB" id="O28848"/>
<dbReference type="Proteomes" id="UP000002199">
    <property type="component" value="Chromosome"/>
</dbReference>
<dbReference type="GO" id="GO:0009328">
    <property type="term" value="C:phenylalanine-tRNA ligase complex"/>
    <property type="evidence" value="ECO:0007669"/>
    <property type="project" value="TreeGrafter"/>
</dbReference>
<dbReference type="GO" id="GO:0005524">
    <property type="term" value="F:ATP binding"/>
    <property type="evidence" value="ECO:0007669"/>
    <property type="project" value="UniProtKB-UniRule"/>
</dbReference>
<dbReference type="GO" id="GO:0000287">
    <property type="term" value="F:magnesium ion binding"/>
    <property type="evidence" value="ECO:0007669"/>
    <property type="project" value="InterPro"/>
</dbReference>
<dbReference type="GO" id="GO:0004826">
    <property type="term" value="F:phenylalanine-tRNA ligase activity"/>
    <property type="evidence" value="ECO:0007669"/>
    <property type="project" value="UniProtKB-UniRule"/>
</dbReference>
<dbReference type="GO" id="GO:0003723">
    <property type="term" value="F:RNA binding"/>
    <property type="evidence" value="ECO:0007669"/>
    <property type="project" value="InterPro"/>
</dbReference>
<dbReference type="GO" id="GO:0006432">
    <property type="term" value="P:phenylalanyl-tRNA aminoacylation"/>
    <property type="evidence" value="ECO:0007669"/>
    <property type="project" value="UniProtKB-UniRule"/>
</dbReference>
<dbReference type="CDD" id="cd00769">
    <property type="entry name" value="PheRS_beta_core"/>
    <property type="match status" value="1"/>
</dbReference>
<dbReference type="FunFam" id="3.30.56.10:FF:000011">
    <property type="entry name" value="Phenylalanine--tRNA ligase beta subunit"/>
    <property type="match status" value="1"/>
</dbReference>
<dbReference type="FunFam" id="3.50.40.10:FF:000003">
    <property type="entry name" value="Phenylalanine--tRNA ligase beta subunit"/>
    <property type="match status" value="1"/>
</dbReference>
<dbReference type="Gene3D" id="3.30.56.10">
    <property type="match status" value="2"/>
</dbReference>
<dbReference type="Gene3D" id="3.30.930.10">
    <property type="entry name" value="Bira Bifunctional Protein, Domain 2"/>
    <property type="match status" value="1"/>
</dbReference>
<dbReference type="Gene3D" id="3.50.40.10">
    <property type="entry name" value="Phenylalanyl-trna Synthetase, Chain B, domain 3"/>
    <property type="match status" value="1"/>
</dbReference>
<dbReference type="HAMAP" id="MF_00284">
    <property type="entry name" value="Phe_tRNA_synth_beta2"/>
    <property type="match status" value="1"/>
</dbReference>
<dbReference type="InterPro" id="IPR045864">
    <property type="entry name" value="aa-tRNA-synth_II/BPL/LPL"/>
</dbReference>
<dbReference type="InterPro" id="IPR005146">
    <property type="entry name" value="B3/B4_tRNA-bd"/>
</dbReference>
<dbReference type="InterPro" id="IPR009061">
    <property type="entry name" value="DNA-bd_dom_put_sf"/>
</dbReference>
<dbReference type="InterPro" id="IPR045060">
    <property type="entry name" value="Phe-tRNA-ligase_IIc_bsu"/>
</dbReference>
<dbReference type="InterPro" id="IPR004531">
    <property type="entry name" value="Phe-tRNA-synth_IIc_bsu_arc_euk"/>
</dbReference>
<dbReference type="InterPro" id="IPR020825">
    <property type="entry name" value="Phe-tRNA_synthase-like_B3/B4"/>
</dbReference>
<dbReference type="InterPro" id="IPR022918">
    <property type="entry name" value="Phe_tRNA_ligase_beta2_arc"/>
</dbReference>
<dbReference type="InterPro" id="IPR041616">
    <property type="entry name" value="PheRS_beta_core"/>
</dbReference>
<dbReference type="InterPro" id="IPR005147">
    <property type="entry name" value="tRNA_synthase_B5-dom"/>
</dbReference>
<dbReference type="NCBIfam" id="TIGR00471">
    <property type="entry name" value="pheT_arch"/>
    <property type="match status" value="1"/>
</dbReference>
<dbReference type="PANTHER" id="PTHR10947:SF0">
    <property type="entry name" value="PHENYLALANINE--TRNA LIGASE BETA SUBUNIT"/>
    <property type="match status" value="1"/>
</dbReference>
<dbReference type="PANTHER" id="PTHR10947">
    <property type="entry name" value="PHENYLALANYL-TRNA SYNTHETASE BETA CHAIN AND LEUCINE-RICH REPEAT-CONTAINING PROTEIN 47"/>
    <property type="match status" value="1"/>
</dbReference>
<dbReference type="Pfam" id="PF03483">
    <property type="entry name" value="B3_4"/>
    <property type="match status" value="1"/>
</dbReference>
<dbReference type="Pfam" id="PF03484">
    <property type="entry name" value="B5"/>
    <property type="match status" value="1"/>
</dbReference>
<dbReference type="Pfam" id="PF17759">
    <property type="entry name" value="tRNA_synthFbeta"/>
    <property type="match status" value="1"/>
</dbReference>
<dbReference type="SMART" id="SM00873">
    <property type="entry name" value="B3_4"/>
    <property type="match status" value="1"/>
</dbReference>
<dbReference type="SMART" id="SM00874">
    <property type="entry name" value="B5"/>
    <property type="match status" value="1"/>
</dbReference>
<dbReference type="SUPFAM" id="SSF55681">
    <property type="entry name" value="Class II aaRS and biotin synthetases"/>
    <property type="match status" value="1"/>
</dbReference>
<dbReference type="SUPFAM" id="SSF46955">
    <property type="entry name" value="Putative DNA-binding domain"/>
    <property type="match status" value="2"/>
</dbReference>
<dbReference type="PROSITE" id="PS51483">
    <property type="entry name" value="B5"/>
    <property type="match status" value="1"/>
</dbReference>
<comment type="catalytic activity">
    <reaction evidence="1">
        <text>tRNA(Phe) + L-phenylalanine + ATP = L-phenylalanyl-tRNA(Phe) + AMP + diphosphate + H(+)</text>
        <dbReference type="Rhea" id="RHEA:19413"/>
        <dbReference type="Rhea" id="RHEA-COMP:9668"/>
        <dbReference type="Rhea" id="RHEA-COMP:9699"/>
        <dbReference type="ChEBI" id="CHEBI:15378"/>
        <dbReference type="ChEBI" id="CHEBI:30616"/>
        <dbReference type="ChEBI" id="CHEBI:33019"/>
        <dbReference type="ChEBI" id="CHEBI:58095"/>
        <dbReference type="ChEBI" id="CHEBI:78442"/>
        <dbReference type="ChEBI" id="CHEBI:78531"/>
        <dbReference type="ChEBI" id="CHEBI:456215"/>
        <dbReference type="EC" id="6.1.1.20"/>
    </reaction>
</comment>
<comment type="cofactor">
    <cofactor evidence="1">
        <name>Mg(2+)</name>
        <dbReference type="ChEBI" id="CHEBI:18420"/>
    </cofactor>
</comment>
<comment type="subunit">
    <text evidence="1">Tetramer of two alpha and two beta subunits.</text>
</comment>
<comment type="subcellular location">
    <subcellularLocation>
        <location evidence="1">Cytoplasm</location>
    </subcellularLocation>
</comment>
<comment type="similarity">
    <text evidence="1 2">Belongs to the phenylalanyl-tRNA synthetase beta subunit family. Type 2 subfamily.</text>
</comment>
<gene>
    <name evidence="1" type="primary">pheT</name>
    <name type="ordered locus">AF_1424</name>
</gene>
<protein>
    <recommendedName>
        <fullName evidence="1">Phenylalanine--tRNA ligase beta subunit</fullName>
        <ecNumber evidence="1">6.1.1.20</ecNumber>
    </recommendedName>
    <alternativeName>
        <fullName evidence="1">Phenylalanyl-tRNA synthetase beta subunit</fullName>
        <shortName evidence="1">PheRS</shortName>
    </alternativeName>
</protein>